<protein>
    <recommendedName>
        <fullName evidence="1">UPF0210 protein Csac_1314</fullName>
    </recommendedName>
</protein>
<name>Y1314_CALS8</name>
<accession>A4XJ31</accession>
<evidence type="ECO:0000255" key="1">
    <source>
        <dbReference type="HAMAP-Rule" id="MF_01221"/>
    </source>
</evidence>
<reference key="1">
    <citation type="submission" date="2007-04" db="EMBL/GenBank/DDBJ databases">
        <title>Genome sequence of the thermophilic hydrogen-producing bacterium Caldicellulosiruptor saccharolyticus DSM 8903.</title>
        <authorList>
            <person name="Copeland A."/>
            <person name="Lucas S."/>
            <person name="Lapidus A."/>
            <person name="Barry K."/>
            <person name="Detter J.C."/>
            <person name="Glavina del Rio T."/>
            <person name="Hammon N."/>
            <person name="Israni S."/>
            <person name="Dalin E."/>
            <person name="Tice H."/>
            <person name="Pitluck S."/>
            <person name="Kiss H."/>
            <person name="Brettin T."/>
            <person name="Bruce D."/>
            <person name="Han C."/>
            <person name="Schmutz J."/>
            <person name="Larimer F."/>
            <person name="Land M."/>
            <person name="Hauser L."/>
            <person name="Kyrpides N."/>
            <person name="Lykidis A."/>
            <person name="van de Werken H.J.G."/>
            <person name="Verhaart M.R.A."/>
            <person name="VanFossen A.L."/>
            <person name="Lewis D.L."/>
            <person name="Nichols J.D."/>
            <person name="Goorissen H.P."/>
            <person name="van Niel E.W.J."/>
            <person name="Stams F.J.M."/>
            <person name="Willquist K.U."/>
            <person name="Ward D.E."/>
            <person name="van der Oost J."/>
            <person name="Kelly R.M."/>
            <person name="Kengen S.M.W."/>
            <person name="Richardson P."/>
        </authorList>
    </citation>
    <scope>NUCLEOTIDE SEQUENCE [LARGE SCALE GENOMIC DNA]</scope>
    <source>
        <strain>ATCC 43494 / DSM 8903 / Tp8T 6331</strain>
    </source>
</reference>
<feature type="chain" id="PRO_1000066748" description="UPF0210 protein Csac_1314">
    <location>
        <begin position="1"/>
        <end position="452"/>
    </location>
</feature>
<organism>
    <name type="scientific">Caldicellulosiruptor saccharolyticus (strain ATCC 43494 / DSM 8903 / Tp8T 6331)</name>
    <dbReference type="NCBI Taxonomy" id="351627"/>
    <lineage>
        <taxon>Bacteria</taxon>
        <taxon>Bacillati</taxon>
        <taxon>Bacillota</taxon>
        <taxon>Bacillota incertae sedis</taxon>
        <taxon>Caldicellulosiruptorales</taxon>
        <taxon>Caldicellulosiruptoraceae</taxon>
        <taxon>Caldicellulosiruptor</taxon>
    </lineage>
</organism>
<gene>
    <name type="ordered locus">Csac_1314</name>
</gene>
<proteinExistence type="inferred from homology"/>
<comment type="subunit">
    <text evidence="1">Homodimer.</text>
</comment>
<comment type="similarity">
    <text evidence="1">Belongs to the UPF0210 family.</text>
</comment>
<sequence length="452" mass="48333">MFTSQEIIETINMVKQSNLDIRTITVGISLFDCSSDIPQRFIDNMRKKIIKYAGNLKNVANEIEDMFGLPIVNRRVALTPISLLTFSYSYEDLLKVALAIDEIAKELEIDLIGGYSASVHKNYDENTKKFISSIPDALASTDRLCSSVDVGTTRSGINLDVIAHLGHIIKDIAQKTKDKDSFGCARFVVFANAPDDNPFMAGAFHGTGEGDSAINVGISGPGVVKRALEGKKDASIDEVYETIKKMAFKITRAGQLVLKYASERLNIPMGIVDLSLAPTPKIGDSIAEILEEMGLEKVGGYGSTFALALLNDAVKKGGAMAASFTGGLSGAFIPVSEDSGMVKGVEAGALSLEKLEAMTSVCSVGLDMIVVPGDVEAEVISAMIADEIAIGIYNNKTTAVRVIPAYGKKEGDEVNFGGLLGRSKVMSINKSSPKRLIERGGRVPPPVISLRN</sequence>
<dbReference type="EMBL" id="CP000679">
    <property type="protein sequence ID" value="ABP66916.1"/>
    <property type="molecule type" value="Genomic_DNA"/>
</dbReference>
<dbReference type="RefSeq" id="WP_011916851.1">
    <property type="nucleotide sequence ID" value="NC_009437.1"/>
</dbReference>
<dbReference type="SMR" id="A4XJ31"/>
<dbReference type="STRING" id="351627.Csac_1314"/>
<dbReference type="KEGG" id="csc:Csac_1314"/>
<dbReference type="eggNOG" id="COG2848">
    <property type="taxonomic scope" value="Bacteria"/>
</dbReference>
<dbReference type="HOGENOM" id="CLU_048704_0_0_9"/>
<dbReference type="OrthoDB" id="9763001at2"/>
<dbReference type="Proteomes" id="UP000000256">
    <property type="component" value="Chromosome"/>
</dbReference>
<dbReference type="CDD" id="cd08025">
    <property type="entry name" value="RNR_PFL_like_DUF711"/>
    <property type="match status" value="1"/>
</dbReference>
<dbReference type="Gene3D" id="3.20.70.20">
    <property type="match status" value="1"/>
</dbReference>
<dbReference type="HAMAP" id="MF_01221">
    <property type="entry name" value="UPF0210"/>
    <property type="match status" value="1"/>
</dbReference>
<dbReference type="InterPro" id="IPR007841">
    <property type="entry name" value="UPF0210"/>
</dbReference>
<dbReference type="NCBIfam" id="NF003700">
    <property type="entry name" value="PRK05313.1"/>
    <property type="match status" value="1"/>
</dbReference>
<dbReference type="PANTHER" id="PTHR37560:SF1">
    <property type="entry name" value="UPF0210 PROTEIN MJ1665"/>
    <property type="match status" value="1"/>
</dbReference>
<dbReference type="PANTHER" id="PTHR37560">
    <property type="entry name" value="UPF0210 PROTEIN SPR0218"/>
    <property type="match status" value="1"/>
</dbReference>
<dbReference type="Pfam" id="PF05167">
    <property type="entry name" value="DUF711"/>
    <property type="match status" value="1"/>
</dbReference>
<dbReference type="SUPFAM" id="SSF51998">
    <property type="entry name" value="PFL-like glycyl radical enzymes"/>
    <property type="match status" value="1"/>
</dbReference>